<accession>Q1ACF5</accession>
<gene>
    <name type="primary">rpl23</name>
</gene>
<proteinExistence type="inferred from homology"/>
<comment type="function">
    <text evidence="1">Binds to 23S rRNA.</text>
</comment>
<comment type="subunit">
    <text evidence="1">Part of the 50S ribosomal subunit.</text>
</comment>
<comment type="subcellular location">
    <subcellularLocation>
        <location>Plastid</location>
        <location>Chloroplast</location>
    </subcellularLocation>
</comment>
<comment type="similarity">
    <text evidence="2">Belongs to the universal ribosomal protein uL23 family.</text>
</comment>
<evidence type="ECO:0000250" key="1"/>
<evidence type="ECO:0000305" key="2"/>
<sequence length="92" mass="10929">MDKLKKPILTEKSISLLEKRQYTFELDKNITKSEAKKMIETHFQVKVIHMNSYYLPINKKIRKNIGKLKRKKRMIFTLKVGDSIPFSSINMN</sequence>
<geneLocation type="chloroplast"/>
<keyword id="KW-0150">Chloroplast</keyword>
<keyword id="KW-0934">Plastid</keyword>
<keyword id="KW-0687">Ribonucleoprotein</keyword>
<keyword id="KW-0689">Ribosomal protein</keyword>
<keyword id="KW-0694">RNA-binding</keyword>
<keyword id="KW-0699">rRNA-binding</keyword>
<reference key="1">
    <citation type="journal article" date="2006" name="Mol. Biol. Evol.">
        <title>The chloroplast genome sequence of Chara vulgaris sheds new light into the closest green algal relatives of land plants.</title>
        <authorList>
            <person name="Turmel M."/>
            <person name="Otis C."/>
            <person name="Lemieux C."/>
        </authorList>
    </citation>
    <scope>NUCLEOTIDE SEQUENCE [LARGE SCALE GENOMIC DNA]</scope>
</reference>
<organism>
    <name type="scientific">Chara vulgaris</name>
    <name type="common">Common stonewort</name>
    <dbReference type="NCBI Taxonomy" id="55564"/>
    <lineage>
        <taxon>Eukaryota</taxon>
        <taxon>Viridiplantae</taxon>
        <taxon>Streptophyta</taxon>
        <taxon>Charophyceae</taxon>
        <taxon>Charales</taxon>
        <taxon>Characeae</taxon>
        <taxon>Chara</taxon>
    </lineage>
</organism>
<protein>
    <recommendedName>
        <fullName evidence="2">Large ribosomal subunit protein uL23c</fullName>
    </recommendedName>
    <alternativeName>
        <fullName>50S ribosomal protein L23, chloroplastic</fullName>
    </alternativeName>
</protein>
<dbReference type="EMBL" id="DQ229107">
    <property type="protein sequence ID" value="ABA61985.1"/>
    <property type="molecule type" value="Genomic_DNA"/>
</dbReference>
<dbReference type="RefSeq" id="YP_635792.1">
    <property type="nucleotide sequence ID" value="NC_008097.1"/>
</dbReference>
<dbReference type="SMR" id="Q1ACF5"/>
<dbReference type="GeneID" id="4100255"/>
<dbReference type="GO" id="GO:0009507">
    <property type="term" value="C:chloroplast"/>
    <property type="evidence" value="ECO:0007669"/>
    <property type="project" value="UniProtKB-SubCell"/>
</dbReference>
<dbReference type="GO" id="GO:1990904">
    <property type="term" value="C:ribonucleoprotein complex"/>
    <property type="evidence" value="ECO:0007669"/>
    <property type="project" value="UniProtKB-KW"/>
</dbReference>
<dbReference type="GO" id="GO:0005840">
    <property type="term" value="C:ribosome"/>
    <property type="evidence" value="ECO:0007669"/>
    <property type="project" value="UniProtKB-KW"/>
</dbReference>
<dbReference type="GO" id="GO:0019843">
    <property type="term" value="F:rRNA binding"/>
    <property type="evidence" value="ECO:0007669"/>
    <property type="project" value="UniProtKB-UniRule"/>
</dbReference>
<dbReference type="GO" id="GO:0003735">
    <property type="term" value="F:structural constituent of ribosome"/>
    <property type="evidence" value="ECO:0007669"/>
    <property type="project" value="InterPro"/>
</dbReference>
<dbReference type="GO" id="GO:0006412">
    <property type="term" value="P:translation"/>
    <property type="evidence" value="ECO:0007669"/>
    <property type="project" value="UniProtKB-UniRule"/>
</dbReference>
<dbReference type="Gene3D" id="3.30.70.330">
    <property type="match status" value="1"/>
</dbReference>
<dbReference type="HAMAP" id="MF_01369_B">
    <property type="entry name" value="Ribosomal_uL23_B"/>
    <property type="match status" value="1"/>
</dbReference>
<dbReference type="InterPro" id="IPR012677">
    <property type="entry name" value="Nucleotide-bd_a/b_plait_sf"/>
</dbReference>
<dbReference type="InterPro" id="IPR013025">
    <property type="entry name" value="Ribosomal_uL23-like"/>
</dbReference>
<dbReference type="InterPro" id="IPR012678">
    <property type="entry name" value="Ribosomal_uL23/eL15/eS24_sf"/>
</dbReference>
<dbReference type="Pfam" id="PF00276">
    <property type="entry name" value="Ribosomal_L23"/>
    <property type="match status" value="1"/>
</dbReference>
<dbReference type="SUPFAM" id="SSF54189">
    <property type="entry name" value="Ribosomal proteins S24e, L23 and L15e"/>
    <property type="match status" value="1"/>
</dbReference>
<name>RK23_CHAVU</name>
<feature type="chain" id="PRO_0000272891" description="Large ribosomal subunit protein uL23c">
    <location>
        <begin position="1"/>
        <end position="92"/>
    </location>
</feature>